<protein>
    <recommendedName>
        <fullName evidence="1">Crossover junction endodeoxyribonuclease RuvC</fullName>
        <ecNumber evidence="1">3.1.21.10</ecNumber>
    </recommendedName>
    <alternativeName>
        <fullName evidence="1">Holliday junction nuclease RuvC</fullName>
    </alternativeName>
    <alternativeName>
        <fullName evidence="1">Holliday junction resolvase RuvC</fullName>
    </alternativeName>
</protein>
<keyword id="KW-0963">Cytoplasm</keyword>
<keyword id="KW-0227">DNA damage</keyword>
<keyword id="KW-0233">DNA recombination</keyword>
<keyword id="KW-0234">DNA repair</keyword>
<keyword id="KW-0238">DNA-binding</keyword>
<keyword id="KW-0255">Endonuclease</keyword>
<keyword id="KW-0378">Hydrolase</keyword>
<keyword id="KW-0460">Magnesium</keyword>
<keyword id="KW-0479">Metal-binding</keyword>
<keyword id="KW-0540">Nuclease</keyword>
<keyword id="KW-1185">Reference proteome</keyword>
<reference key="1">
    <citation type="journal article" date="2005" name="PLoS Genet.">
        <title>Life in hot carbon monoxide: the complete genome sequence of Carboxydothermus hydrogenoformans Z-2901.</title>
        <authorList>
            <person name="Wu M."/>
            <person name="Ren Q."/>
            <person name="Durkin A.S."/>
            <person name="Daugherty S.C."/>
            <person name="Brinkac L.M."/>
            <person name="Dodson R.J."/>
            <person name="Madupu R."/>
            <person name="Sullivan S.A."/>
            <person name="Kolonay J.F."/>
            <person name="Nelson W.C."/>
            <person name="Tallon L.J."/>
            <person name="Jones K.M."/>
            <person name="Ulrich L.E."/>
            <person name="Gonzalez J.M."/>
            <person name="Zhulin I.B."/>
            <person name="Robb F.T."/>
            <person name="Eisen J.A."/>
        </authorList>
    </citation>
    <scope>NUCLEOTIDE SEQUENCE [LARGE SCALE GENOMIC DNA]</scope>
    <source>
        <strain>ATCC BAA-161 / DSM 6008 / Z-2901</strain>
    </source>
</reference>
<sequence>MKIIGIDPGTAIVGVGVLEKKNGKLIVKNFQAITTPPIAKEKRLKIIFQKLNEILIQEKPEIVVVEELFFSKNVKTAISVGEARGVVLLASALNDIPVLELKPVEVKTIVTGYGHAPKSQVEYMIAKLLGLKTPPKPDDVADALAIAYAGFLKMGGLL</sequence>
<comment type="function">
    <text evidence="1">The RuvA-RuvB-RuvC complex processes Holliday junction (HJ) DNA during genetic recombination and DNA repair. Endonuclease that resolves HJ intermediates. Cleaves cruciform DNA by making single-stranded nicks across the HJ at symmetrical positions within the homologous arms, yielding a 5'-phosphate and a 3'-hydroxyl group; requires a central core of homology in the junction. The consensus cleavage sequence is 5'-(A/T)TT(C/G)-3'. Cleavage occurs on the 3'-side of the TT dinucleotide at the point of strand exchange. HJ branch migration catalyzed by RuvA-RuvB allows RuvC to scan DNA until it finds its consensus sequence, where it cleaves and resolves the cruciform DNA.</text>
</comment>
<comment type="catalytic activity">
    <reaction evidence="1">
        <text>Endonucleolytic cleavage at a junction such as a reciprocal single-stranded crossover between two homologous DNA duplexes (Holliday junction).</text>
        <dbReference type="EC" id="3.1.21.10"/>
    </reaction>
</comment>
<comment type="cofactor">
    <cofactor evidence="1">
        <name>Mg(2+)</name>
        <dbReference type="ChEBI" id="CHEBI:18420"/>
    </cofactor>
    <text evidence="1">Binds 2 Mg(2+) ion per subunit.</text>
</comment>
<comment type="subunit">
    <text evidence="1">Homodimer which binds Holliday junction (HJ) DNA. The HJ becomes 2-fold symmetrical on binding to RuvC with unstacked arms; it has a different conformation from HJ DNA in complex with RuvA. In the full resolvosome a probable DNA-RuvA(4)-RuvB(12)-RuvC(2) complex forms which resolves the HJ.</text>
</comment>
<comment type="subcellular location">
    <subcellularLocation>
        <location evidence="1">Cytoplasm</location>
    </subcellularLocation>
</comment>
<comment type="similarity">
    <text evidence="1">Belongs to the RuvC family.</text>
</comment>
<dbReference type="EC" id="3.1.21.10" evidence="1"/>
<dbReference type="EMBL" id="CP000141">
    <property type="protein sequence ID" value="ABB14900.1"/>
    <property type="molecule type" value="Genomic_DNA"/>
</dbReference>
<dbReference type="RefSeq" id="WP_011344431.1">
    <property type="nucleotide sequence ID" value="NC_007503.1"/>
</dbReference>
<dbReference type="SMR" id="Q3ABX8"/>
<dbReference type="STRING" id="246194.CHY_1524"/>
<dbReference type="KEGG" id="chy:CHY_1524"/>
<dbReference type="eggNOG" id="COG0817">
    <property type="taxonomic scope" value="Bacteria"/>
</dbReference>
<dbReference type="HOGENOM" id="CLU_091257_3_1_9"/>
<dbReference type="InParanoid" id="Q3ABX8"/>
<dbReference type="OrthoDB" id="9805499at2"/>
<dbReference type="Proteomes" id="UP000002706">
    <property type="component" value="Chromosome"/>
</dbReference>
<dbReference type="GO" id="GO:0005737">
    <property type="term" value="C:cytoplasm"/>
    <property type="evidence" value="ECO:0007669"/>
    <property type="project" value="UniProtKB-SubCell"/>
</dbReference>
<dbReference type="GO" id="GO:0048476">
    <property type="term" value="C:Holliday junction resolvase complex"/>
    <property type="evidence" value="ECO:0007669"/>
    <property type="project" value="UniProtKB-UniRule"/>
</dbReference>
<dbReference type="GO" id="GO:0008821">
    <property type="term" value="F:crossover junction DNA endonuclease activity"/>
    <property type="evidence" value="ECO:0007669"/>
    <property type="project" value="UniProtKB-UniRule"/>
</dbReference>
<dbReference type="GO" id="GO:0003677">
    <property type="term" value="F:DNA binding"/>
    <property type="evidence" value="ECO:0007669"/>
    <property type="project" value="UniProtKB-KW"/>
</dbReference>
<dbReference type="GO" id="GO:0000287">
    <property type="term" value="F:magnesium ion binding"/>
    <property type="evidence" value="ECO:0007669"/>
    <property type="project" value="UniProtKB-UniRule"/>
</dbReference>
<dbReference type="GO" id="GO:0006310">
    <property type="term" value="P:DNA recombination"/>
    <property type="evidence" value="ECO:0007669"/>
    <property type="project" value="UniProtKB-UniRule"/>
</dbReference>
<dbReference type="GO" id="GO:0006281">
    <property type="term" value="P:DNA repair"/>
    <property type="evidence" value="ECO:0007669"/>
    <property type="project" value="UniProtKB-UniRule"/>
</dbReference>
<dbReference type="CDD" id="cd16962">
    <property type="entry name" value="RuvC"/>
    <property type="match status" value="1"/>
</dbReference>
<dbReference type="FunFam" id="3.30.420.10:FF:000002">
    <property type="entry name" value="Crossover junction endodeoxyribonuclease RuvC"/>
    <property type="match status" value="1"/>
</dbReference>
<dbReference type="Gene3D" id="3.30.420.10">
    <property type="entry name" value="Ribonuclease H-like superfamily/Ribonuclease H"/>
    <property type="match status" value="1"/>
</dbReference>
<dbReference type="HAMAP" id="MF_00034">
    <property type="entry name" value="RuvC"/>
    <property type="match status" value="1"/>
</dbReference>
<dbReference type="InterPro" id="IPR012337">
    <property type="entry name" value="RNaseH-like_sf"/>
</dbReference>
<dbReference type="InterPro" id="IPR036397">
    <property type="entry name" value="RNaseH_sf"/>
</dbReference>
<dbReference type="InterPro" id="IPR020563">
    <property type="entry name" value="X-over_junc_endoDNase_Mg_BS"/>
</dbReference>
<dbReference type="InterPro" id="IPR002176">
    <property type="entry name" value="X-over_junc_endoDNase_RuvC"/>
</dbReference>
<dbReference type="NCBIfam" id="NF000711">
    <property type="entry name" value="PRK00039.2-1"/>
    <property type="match status" value="1"/>
</dbReference>
<dbReference type="NCBIfam" id="TIGR00228">
    <property type="entry name" value="ruvC"/>
    <property type="match status" value="1"/>
</dbReference>
<dbReference type="PANTHER" id="PTHR30194">
    <property type="entry name" value="CROSSOVER JUNCTION ENDODEOXYRIBONUCLEASE RUVC"/>
    <property type="match status" value="1"/>
</dbReference>
<dbReference type="PANTHER" id="PTHR30194:SF3">
    <property type="entry name" value="CROSSOVER JUNCTION ENDODEOXYRIBONUCLEASE RUVC"/>
    <property type="match status" value="1"/>
</dbReference>
<dbReference type="Pfam" id="PF02075">
    <property type="entry name" value="RuvC"/>
    <property type="match status" value="1"/>
</dbReference>
<dbReference type="PRINTS" id="PR00696">
    <property type="entry name" value="RSOLVASERUVC"/>
</dbReference>
<dbReference type="SUPFAM" id="SSF53098">
    <property type="entry name" value="Ribonuclease H-like"/>
    <property type="match status" value="1"/>
</dbReference>
<dbReference type="PROSITE" id="PS01321">
    <property type="entry name" value="RUVC"/>
    <property type="match status" value="1"/>
</dbReference>
<gene>
    <name evidence="1" type="primary">ruvC</name>
    <name type="ordered locus">CHY_1524</name>
</gene>
<name>RUVC_CARHZ</name>
<organism>
    <name type="scientific">Carboxydothermus hydrogenoformans (strain ATCC BAA-161 / DSM 6008 / Z-2901)</name>
    <dbReference type="NCBI Taxonomy" id="246194"/>
    <lineage>
        <taxon>Bacteria</taxon>
        <taxon>Bacillati</taxon>
        <taxon>Bacillota</taxon>
        <taxon>Clostridia</taxon>
        <taxon>Thermoanaerobacterales</taxon>
        <taxon>Thermoanaerobacteraceae</taxon>
        <taxon>Carboxydothermus</taxon>
    </lineage>
</organism>
<proteinExistence type="inferred from homology"/>
<feature type="chain" id="PRO_0000225129" description="Crossover junction endodeoxyribonuclease RuvC">
    <location>
        <begin position="1"/>
        <end position="158"/>
    </location>
</feature>
<feature type="active site" evidence="1">
    <location>
        <position position="7"/>
    </location>
</feature>
<feature type="active site" evidence="1">
    <location>
        <position position="66"/>
    </location>
</feature>
<feature type="active site" evidence="1">
    <location>
        <position position="139"/>
    </location>
</feature>
<feature type="binding site" evidence="1">
    <location>
        <position position="7"/>
    </location>
    <ligand>
        <name>Mg(2+)</name>
        <dbReference type="ChEBI" id="CHEBI:18420"/>
        <label>1</label>
    </ligand>
</feature>
<feature type="binding site" evidence="1">
    <location>
        <position position="66"/>
    </location>
    <ligand>
        <name>Mg(2+)</name>
        <dbReference type="ChEBI" id="CHEBI:18420"/>
        <label>2</label>
    </ligand>
</feature>
<feature type="binding site" evidence="1">
    <location>
        <position position="139"/>
    </location>
    <ligand>
        <name>Mg(2+)</name>
        <dbReference type="ChEBI" id="CHEBI:18420"/>
        <label>1</label>
    </ligand>
</feature>
<evidence type="ECO:0000255" key="1">
    <source>
        <dbReference type="HAMAP-Rule" id="MF_00034"/>
    </source>
</evidence>
<accession>Q3ABX8</accession>